<feature type="signal peptide" evidence="3">
    <location>
        <begin position="1"/>
        <end position="21"/>
    </location>
</feature>
<feature type="chain" id="PRO_0000422904" description="Three-finger toxin MALT0066C" evidence="5">
    <location>
        <begin position="22"/>
        <end position="83"/>
    </location>
</feature>
<feature type="disulfide bond" evidence="1">
    <location>
        <begin position="24"/>
        <end position="45"/>
    </location>
</feature>
<feature type="disulfide bond" evidence="1">
    <location>
        <begin position="38"/>
        <end position="62"/>
    </location>
</feature>
<feature type="disulfide bond" evidence="1">
    <location>
        <begin position="64"/>
        <end position="75"/>
    </location>
</feature>
<feature type="disulfide bond" evidence="1">
    <location>
        <begin position="76"/>
        <end position="81"/>
    </location>
</feature>
<comment type="function">
    <text evidence="2">Binds to muscle nicotinic acetylcholine receptor (nAChR) and inhibit acetylcholine from binding to the receptor, thereby impairing neuromuscular transmission.</text>
</comment>
<comment type="subunit">
    <text evidence="5">Dimer.</text>
</comment>
<comment type="subcellular location">
    <subcellularLocation>
        <location evidence="3">Secreted</location>
    </subcellularLocation>
</comment>
<comment type="tissue specificity">
    <text evidence="4">Expressed by the venom gland.</text>
</comment>
<comment type="similarity">
    <text evidence="4">Belongs to the three-finger toxin family. Short-chain subfamily. Type I alpha-neurotoxin sub-subfamily.</text>
</comment>
<protein>
    <recommendedName>
        <fullName>Three-finger toxin MALT0066C</fullName>
    </recommendedName>
    <alternativeName>
        <fullName>MALT0066C</fullName>
    </alternativeName>
</protein>
<keyword id="KW-0008">Acetylcholine receptor inhibiting toxin</keyword>
<keyword id="KW-0903">Direct protein sequencing</keyword>
<keyword id="KW-1015">Disulfide bond</keyword>
<keyword id="KW-0872">Ion channel impairing toxin</keyword>
<keyword id="KW-0528">Neurotoxin</keyword>
<keyword id="KW-0629">Postsynaptic neurotoxin</keyword>
<keyword id="KW-0964">Secreted</keyword>
<keyword id="KW-0732">Signal</keyword>
<keyword id="KW-0800">Toxin</keyword>
<organism>
    <name type="scientific">Micrurus altirostris</name>
    <name type="common">Uruguayan coral snake</name>
    <name type="synonym">Elaps altirostris</name>
    <dbReference type="NCBI Taxonomy" id="129457"/>
    <lineage>
        <taxon>Eukaryota</taxon>
        <taxon>Metazoa</taxon>
        <taxon>Chordata</taxon>
        <taxon>Craniata</taxon>
        <taxon>Vertebrata</taxon>
        <taxon>Euteleostomi</taxon>
        <taxon>Lepidosauria</taxon>
        <taxon>Squamata</taxon>
        <taxon>Bifurcata</taxon>
        <taxon>Unidentata</taxon>
        <taxon>Episquamata</taxon>
        <taxon>Toxicofera</taxon>
        <taxon>Serpentes</taxon>
        <taxon>Colubroidea</taxon>
        <taxon>Elapidae</taxon>
        <taxon>Elapinae</taxon>
        <taxon>Micrurus</taxon>
    </lineage>
</organism>
<proteinExistence type="evidence at protein level"/>
<evidence type="ECO:0000250" key="1">
    <source>
        <dbReference type="UniProtKB" id="P0C1Z0"/>
    </source>
</evidence>
<evidence type="ECO:0000250" key="2">
    <source>
        <dbReference type="UniProtKB" id="P60775"/>
    </source>
</evidence>
<evidence type="ECO:0000269" key="3">
    <source>
    </source>
</evidence>
<evidence type="ECO:0000305" key="4"/>
<evidence type="ECO:0000305" key="5">
    <source>
    </source>
</evidence>
<dbReference type="EMBL" id="JF754482">
    <property type="protein sequence ID" value="AED89571.1"/>
    <property type="molecule type" value="mRNA"/>
</dbReference>
<dbReference type="SMR" id="F5CPE4"/>
<dbReference type="GO" id="GO:0005576">
    <property type="term" value="C:extracellular region"/>
    <property type="evidence" value="ECO:0007669"/>
    <property type="project" value="UniProtKB-SubCell"/>
</dbReference>
<dbReference type="GO" id="GO:0030550">
    <property type="term" value="F:acetylcholine receptor inhibitor activity"/>
    <property type="evidence" value="ECO:0007669"/>
    <property type="project" value="UniProtKB-KW"/>
</dbReference>
<dbReference type="GO" id="GO:0099106">
    <property type="term" value="F:ion channel regulator activity"/>
    <property type="evidence" value="ECO:0007669"/>
    <property type="project" value="UniProtKB-KW"/>
</dbReference>
<dbReference type="GO" id="GO:0090729">
    <property type="term" value="F:toxin activity"/>
    <property type="evidence" value="ECO:0007669"/>
    <property type="project" value="UniProtKB-KW"/>
</dbReference>
<dbReference type="CDD" id="cd00206">
    <property type="entry name" value="TFP_snake_toxin"/>
    <property type="match status" value="1"/>
</dbReference>
<dbReference type="Gene3D" id="2.10.60.10">
    <property type="entry name" value="CD59"/>
    <property type="match status" value="1"/>
</dbReference>
<dbReference type="InterPro" id="IPR003571">
    <property type="entry name" value="Snake_3FTx"/>
</dbReference>
<dbReference type="InterPro" id="IPR045860">
    <property type="entry name" value="Snake_toxin-like_sf"/>
</dbReference>
<dbReference type="InterPro" id="IPR018354">
    <property type="entry name" value="Snake_toxin_con_site"/>
</dbReference>
<dbReference type="InterPro" id="IPR054131">
    <property type="entry name" value="Toxin_cobra-type"/>
</dbReference>
<dbReference type="Pfam" id="PF21947">
    <property type="entry name" value="Toxin_cobra-type"/>
    <property type="match status" value="1"/>
</dbReference>
<dbReference type="SUPFAM" id="SSF57302">
    <property type="entry name" value="Snake toxin-like"/>
    <property type="match status" value="1"/>
</dbReference>
<dbReference type="PROSITE" id="PS00272">
    <property type="entry name" value="SNAKE_TOXIN"/>
    <property type="match status" value="1"/>
</dbReference>
<accession>F5CPE4</accession>
<reference key="1">
    <citation type="journal article" date="2011" name="J. Proteomics">
        <title>Snake venomics and venom gland transcriptomic analysis of Brazilian coral snakes, Micrurus altirostris and M. corallinus.</title>
        <authorList>
            <person name="Correa-Netto C."/>
            <person name="Junqueira-de-Azevedo Ide L."/>
            <person name="Silva D.A."/>
            <person name="Ho P.L."/>
            <person name="Leitao-de-Araujo M."/>
            <person name="Alves M.L."/>
            <person name="Sanz L."/>
            <person name="Foguel D."/>
            <person name="Zingali R.B."/>
            <person name="Calvete J.J."/>
        </authorList>
    </citation>
    <scope>NUCLEOTIDE SEQUENCE [MRNA]</scope>
    <scope>PROTEIN SEQUENCE OF 22-36</scope>
    <scope>SUBUNIT</scope>
    <scope>IDENTIFICATION BY MASS SPECTROMETRY</scope>
    <scope>SUBCELLULAR LOCATION</scope>
    <source>
        <tissue>Venom</tissue>
        <tissue>Venom gland</tissue>
    </source>
</reference>
<sequence length="83" mass="9146">MKTLLLTLVVVTIVCLDFGHTLICYNYETPLDKTTECCGNGVTTCFAKSWRDHRGLRTDRGCGCPNVKPGVTINCCKTDRCNG</sequence>
<name>3S166_MICAT</name>